<sequence>MSILHNDWADVLEAEFQKPYYVQLREFLKQEYSTQTIYPSMYDIFNALHYTPLAEAKVVILGQDPYHGPNQAHGLSFSVKPGVPLPPSLQNIFKELREDLGCPIPNNGHLTPWAEQGVLLLNTVLTVRKGQAASHRGKGWESFTDRVITCLNEREKPVIFVLWGRHAQEKQALITNDRHYILTAPHPSPFSANRGFFGSRPFSTINRILQEQGESQIHWEIPNL</sequence>
<name>UNG_HALH5</name>
<comment type="function">
    <text evidence="1">Excises uracil residues from the DNA which can arise as a result of misincorporation of dUMP residues by DNA polymerase or due to deamination of cytosine.</text>
</comment>
<comment type="catalytic activity">
    <reaction>
        <text>Hydrolyzes single-stranded DNA or mismatched double-stranded DNA and polynucleotides, releasing free uracil.</text>
        <dbReference type="EC" id="3.2.2.27"/>
    </reaction>
</comment>
<comment type="subcellular location">
    <subcellularLocation>
        <location evidence="1">Cytoplasm</location>
    </subcellularLocation>
</comment>
<comment type="similarity">
    <text evidence="2">Belongs to the uracil-DNA glycosylase (UDG) superfamily. UNG family.</text>
</comment>
<accession>Q9K682</accession>
<reference key="1">
    <citation type="journal article" date="2000" name="Nucleic Acids Res.">
        <title>Complete genome sequence of the alkaliphilic bacterium Bacillus halodurans and genomic sequence comparison with Bacillus subtilis.</title>
        <authorList>
            <person name="Takami H."/>
            <person name="Nakasone K."/>
            <person name="Takaki Y."/>
            <person name="Maeno G."/>
            <person name="Sasaki R."/>
            <person name="Masui N."/>
            <person name="Fuji F."/>
            <person name="Hirama C."/>
            <person name="Nakamura Y."/>
            <person name="Ogasawara N."/>
            <person name="Kuhara S."/>
            <person name="Horikoshi K."/>
        </authorList>
    </citation>
    <scope>NUCLEOTIDE SEQUENCE [LARGE SCALE GENOMIC DNA]</scope>
    <source>
        <strain>ATCC BAA-125 / DSM 18197 / FERM 7344 / JCM 9153 / C-125</strain>
    </source>
</reference>
<feature type="chain" id="PRO_0000176063" description="Uracil-DNA glycosylase">
    <location>
        <begin position="1"/>
        <end position="224"/>
    </location>
</feature>
<feature type="active site" description="Proton acceptor" evidence="1">
    <location>
        <position position="64"/>
    </location>
</feature>
<keyword id="KW-0963">Cytoplasm</keyword>
<keyword id="KW-0227">DNA damage</keyword>
<keyword id="KW-0234">DNA repair</keyword>
<keyword id="KW-0378">Hydrolase</keyword>
<keyword id="KW-1185">Reference proteome</keyword>
<organism>
    <name type="scientific">Halalkalibacterium halodurans (strain ATCC BAA-125 / DSM 18197 / FERM 7344 / JCM 9153 / C-125)</name>
    <name type="common">Bacillus halodurans</name>
    <dbReference type="NCBI Taxonomy" id="272558"/>
    <lineage>
        <taxon>Bacteria</taxon>
        <taxon>Bacillati</taxon>
        <taxon>Bacillota</taxon>
        <taxon>Bacilli</taxon>
        <taxon>Bacillales</taxon>
        <taxon>Bacillaceae</taxon>
        <taxon>Halalkalibacterium (ex Joshi et al. 2022)</taxon>
    </lineage>
</organism>
<proteinExistence type="inferred from homology"/>
<evidence type="ECO:0000250" key="1"/>
<evidence type="ECO:0000305" key="2"/>
<gene>
    <name type="primary">ung</name>
    <name type="ordered locus">BH3850</name>
</gene>
<dbReference type="EC" id="3.2.2.27"/>
<dbReference type="EMBL" id="BA000004">
    <property type="protein sequence ID" value="BAB07569.1"/>
    <property type="molecule type" value="Genomic_DNA"/>
</dbReference>
<dbReference type="PIR" id="B84131">
    <property type="entry name" value="B84131"/>
</dbReference>
<dbReference type="RefSeq" id="WP_010899975.1">
    <property type="nucleotide sequence ID" value="NC_002570.2"/>
</dbReference>
<dbReference type="SMR" id="Q9K682"/>
<dbReference type="STRING" id="272558.gene:10729763"/>
<dbReference type="KEGG" id="bha:BH3850"/>
<dbReference type="eggNOG" id="COG0692">
    <property type="taxonomic scope" value="Bacteria"/>
</dbReference>
<dbReference type="HOGENOM" id="CLU_032162_3_0_9"/>
<dbReference type="OrthoDB" id="9804372at2"/>
<dbReference type="Proteomes" id="UP000001258">
    <property type="component" value="Chromosome"/>
</dbReference>
<dbReference type="GO" id="GO:0005737">
    <property type="term" value="C:cytoplasm"/>
    <property type="evidence" value="ECO:0007669"/>
    <property type="project" value="UniProtKB-SubCell"/>
</dbReference>
<dbReference type="GO" id="GO:0004844">
    <property type="term" value="F:uracil DNA N-glycosylase activity"/>
    <property type="evidence" value="ECO:0007669"/>
    <property type="project" value="UniProtKB-UniRule"/>
</dbReference>
<dbReference type="GO" id="GO:0097510">
    <property type="term" value="P:base-excision repair, AP site formation via deaminated base removal"/>
    <property type="evidence" value="ECO:0007669"/>
    <property type="project" value="TreeGrafter"/>
</dbReference>
<dbReference type="CDD" id="cd10027">
    <property type="entry name" value="UDG-F1-like"/>
    <property type="match status" value="1"/>
</dbReference>
<dbReference type="FunFam" id="3.40.470.10:FF:000001">
    <property type="entry name" value="Uracil-DNA glycosylase"/>
    <property type="match status" value="1"/>
</dbReference>
<dbReference type="Gene3D" id="3.40.470.10">
    <property type="entry name" value="Uracil-DNA glycosylase-like domain"/>
    <property type="match status" value="1"/>
</dbReference>
<dbReference type="HAMAP" id="MF_00148">
    <property type="entry name" value="UDG"/>
    <property type="match status" value="1"/>
</dbReference>
<dbReference type="InterPro" id="IPR002043">
    <property type="entry name" value="UDG_fam1"/>
</dbReference>
<dbReference type="InterPro" id="IPR018085">
    <property type="entry name" value="Ura-DNA_Glyclase_AS"/>
</dbReference>
<dbReference type="InterPro" id="IPR005122">
    <property type="entry name" value="Uracil-DNA_glycosylase-like"/>
</dbReference>
<dbReference type="InterPro" id="IPR036895">
    <property type="entry name" value="Uracil-DNA_glycosylase-like_sf"/>
</dbReference>
<dbReference type="NCBIfam" id="NF003588">
    <property type="entry name" value="PRK05254.1-1"/>
    <property type="match status" value="1"/>
</dbReference>
<dbReference type="NCBIfam" id="NF003589">
    <property type="entry name" value="PRK05254.1-2"/>
    <property type="match status" value="1"/>
</dbReference>
<dbReference type="NCBIfam" id="NF003591">
    <property type="entry name" value="PRK05254.1-4"/>
    <property type="match status" value="1"/>
</dbReference>
<dbReference type="NCBIfam" id="NF003592">
    <property type="entry name" value="PRK05254.1-5"/>
    <property type="match status" value="1"/>
</dbReference>
<dbReference type="NCBIfam" id="TIGR00628">
    <property type="entry name" value="ung"/>
    <property type="match status" value="1"/>
</dbReference>
<dbReference type="PANTHER" id="PTHR11264">
    <property type="entry name" value="URACIL-DNA GLYCOSYLASE"/>
    <property type="match status" value="1"/>
</dbReference>
<dbReference type="PANTHER" id="PTHR11264:SF0">
    <property type="entry name" value="URACIL-DNA GLYCOSYLASE"/>
    <property type="match status" value="1"/>
</dbReference>
<dbReference type="Pfam" id="PF03167">
    <property type="entry name" value="UDG"/>
    <property type="match status" value="1"/>
</dbReference>
<dbReference type="SMART" id="SM00986">
    <property type="entry name" value="UDG"/>
    <property type="match status" value="1"/>
</dbReference>
<dbReference type="SMART" id="SM00987">
    <property type="entry name" value="UreE_C"/>
    <property type="match status" value="1"/>
</dbReference>
<dbReference type="SUPFAM" id="SSF52141">
    <property type="entry name" value="Uracil-DNA glycosylase-like"/>
    <property type="match status" value="1"/>
</dbReference>
<dbReference type="PROSITE" id="PS00130">
    <property type="entry name" value="U_DNA_GLYCOSYLASE"/>
    <property type="match status" value="1"/>
</dbReference>
<protein>
    <recommendedName>
        <fullName>Uracil-DNA glycosylase</fullName>
        <shortName>UDG</shortName>
        <ecNumber>3.2.2.27</ecNumber>
    </recommendedName>
</protein>